<proteinExistence type="inferred from homology"/>
<feature type="chain" id="PRO_0000312461" description="5-methylthioadenosine/S-adenosylhomocysteine deaminase">
    <location>
        <begin position="1"/>
        <end position="431"/>
    </location>
</feature>
<feature type="binding site" evidence="1">
    <location>
        <position position="64"/>
    </location>
    <ligand>
        <name>Zn(2+)</name>
        <dbReference type="ChEBI" id="CHEBI:29105"/>
    </ligand>
</feature>
<feature type="binding site" evidence="1">
    <location>
        <position position="66"/>
    </location>
    <ligand>
        <name>Zn(2+)</name>
        <dbReference type="ChEBI" id="CHEBI:29105"/>
    </ligand>
</feature>
<feature type="binding site" evidence="1">
    <location>
        <position position="93"/>
    </location>
    <ligand>
        <name>substrate</name>
    </ligand>
</feature>
<feature type="binding site" evidence="1">
    <location>
        <position position="145"/>
    </location>
    <ligand>
        <name>substrate</name>
    </ligand>
</feature>
<feature type="binding site" evidence="1">
    <location>
        <position position="183"/>
    </location>
    <ligand>
        <name>substrate</name>
    </ligand>
</feature>
<feature type="binding site" evidence="1">
    <location>
        <position position="210"/>
    </location>
    <ligand>
        <name>Zn(2+)</name>
        <dbReference type="ChEBI" id="CHEBI:29105"/>
    </ligand>
</feature>
<feature type="binding site" evidence="1">
    <location>
        <position position="213"/>
    </location>
    <ligand>
        <name>substrate</name>
    </ligand>
</feature>
<feature type="binding site" evidence="1">
    <location>
        <position position="299"/>
    </location>
    <ligand>
        <name>substrate</name>
    </ligand>
</feature>
<feature type="binding site" evidence="1">
    <location>
        <position position="299"/>
    </location>
    <ligand>
        <name>Zn(2+)</name>
        <dbReference type="ChEBI" id="CHEBI:29105"/>
    </ligand>
</feature>
<protein>
    <recommendedName>
        <fullName evidence="1">5-methylthioadenosine/S-adenosylhomocysteine deaminase</fullName>
        <shortName evidence="1">MTA/SAH deaminase</shortName>
        <ecNumber evidence="1">3.5.4.28</ecNumber>
        <ecNumber evidence="1">3.5.4.31</ecNumber>
    </recommendedName>
</protein>
<sequence length="431" mass="47578">MRILLDNISIIPVSGSNSFIEKGYLLIEDVFIKELGTGKAPEGEFDHIIDGENQVLLPGFINAHTHAAMTLLRGYADDLPLMEWLENKIWPLEAKLTPEDIYWGTMLAIVEMIKSGTTTFNDMYFCMDEVARAVELSGMRAVLARGMVGVGPESEQAIEDSRELIGKWQGQAGGRISFRLGPHAPYTCPPAYLERVMQLSDELQAGIHIHVAETRVEYEDILKQYGKTPVSHLESLGLFQGRQVLAAHCVHLNEEEIGILHQYQVGVAHNPESNMKLASGIAPVPRMLESGIAVALGTDGASSNNNLDMLQEMRSSSFLHKVNTMDPMVLPAYQALEMATANGAISLGMGNELGRLEPGYRADMIIMNLKEAHMTPRYDLLANIVYSAQASDVNSVIIDGKIVMENREIKTFDEQEVLAKARETARKLVGK</sequence>
<reference key="1">
    <citation type="journal article" date="2010" name="Environ. Microbiol.">
        <title>The genome of Syntrophomonas wolfei: new insights into syntrophic metabolism and biohydrogen production.</title>
        <authorList>
            <person name="Sieber J.R."/>
            <person name="Sims D.R."/>
            <person name="Han C."/>
            <person name="Kim E."/>
            <person name="Lykidis A."/>
            <person name="Lapidus A.L."/>
            <person name="McDonnald E."/>
            <person name="Rohlin L."/>
            <person name="Culley D.E."/>
            <person name="Gunsalus R."/>
            <person name="McInerney M.J."/>
        </authorList>
    </citation>
    <scope>NUCLEOTIDE SEQUENCE [LARGE SCALE GENOMIC DNA]</scope>
    <source>
        <strain>DSM 2245B / Goettingen</strain>
    </source>
</reference>
<gene>
    <name evidence="1" type="primary">mtaD</name>
    <name type="ordered locus">Swol_0781</name>
</gene>
<comment type="function">
    <text evidence="1">Catalyzes the deamination of 5-methylthioadenosine and S-adenosyl-L-homocysteine into 5-methylthioinosine and S-inosyl-L-homocysteine, respectively. Is also able to deaminate adenosine.</text>
</comment>
<comment type="catalytic activity">
    <reaction evidence="1">
        <text>S-adenosyl-L-homocysteine + H2O + H(+) = S-inosyl-L-homocysteine + NH4(+)</text>
        <dbReference type="Rhea" id="RHEA:20716"/>
        <dbReference type="ChEBI" id="CHEBI:15377"/>
        <dbReference type="ChEBI" id="CHEBI:15378"/>
        <dbReference type="ChEBI" id="CHEBI:28938"/>
        <dbReference type="ChEBI" id="CHEBI:57856"/>
        <dbReference type="ChEBI" id="CHEBI:57985"/>
        <dbReference type="EC" id="3.5.4.28"/>
    </reaction>
</comment>
<comment type="catalytic activity">
    <reaction evidence="1">
        <text>S-methyl-5'-thioadenosine + H2O + H(+) = S-methyl-5'-thioinosine + NH4(+)</text>
        <dbReference type="Rhea" id="RHEA:25025"/>
        <dbReference type="ChEBI" id="CHEBI:15377"/>
        <dbReference type="ChEBI" id="CHEBI:15378"/>
        <dbReference type="ChEBI" id="CHEBI:17509"/>
        <dbReference type="ChEBI" id="CHEBI:28938"/>
        <dbReference type="ChEBI" id="CHEBI:48595"/>
        <dbReference type="EC" id="3.5.4.31"/>
    </reaction>
</comment>
<comment type="cofactor">
    <cofactor evidence="1">
        <name>Zn(2+)</name>
        <dbReference type="ChEBI" id="CHEBI:29105"/>
    </cofactor>
    <text evidence="1">Binds 1 zinc ion per subunit.</text>
</comment>
<comment type="similarity">
    <text evidence="1">Belongs to the metallo-dependent hydrolases superfamily. MTA/SAH deaminase family.</text>
</comment>
<dbReference type="EC" id="3.5.4.28" evidence="1"/>
<dbReference type="EC" id="3.5.4.31" evidence="1"/>
<dbReference type="EMBL" id="CP000448">
    <property type="protein sequence ID" value="ABI68102.1"/>
    <property type="molecule type" value="Genomic_DNA"/>
</dbReference>
<dbReference type="RefSeq" id="WP_011640207.1">
    <property type="nucleotide sequence ID" value="NC_008346.1"/>
</dbReference>
<dbReference type="SMR" id="Q0AYV2"/>
<dbReference type="STRING" id="335541.Swol_0781"/>
<dbReference type="KEGG" id="swo:Swol_0781"/>
<dbReference type="eggNOG" id="COG0402">
    <property type="taxonomic scope" value="Bacteria"/>
</dbReference>
<dbReference type="HOGENOM" id="CLU_012358_2_1_9"/>
<dbReference type="OrthoDB" id="9807210at2"/>
<dbReference type="Proteomes" id="UP000001968">
    <property type="component" value="Chromosome"/>
</dbReference>
<dbReference type="GO" id="GO:0090614">
    <property type="term" value="F:5'-methylthioadenosine deaminase activity"/>
    <property type="evidence" value="ECO:0007669"/>
    <property type="project" value="UniProtKB-UniRule"/>
</dbReference>
<dbReference type="GO" id="GO:0046872">
    <property type="term" value="F:metal ion binding"/>
    <property type="evidence" value="ECO:0007669"/>
    <property type="project" value="UniProtKB-KW"/>
</dbReference>
<dbReference type="GO" id="GO:0050270">
    <property type="term" value="F:S-adenosylhomocysteine deaminase activity"/>
    <property type="evidence" value="ECO:0007669"/>
    <property type="project" value="UniProtKB-UniRule"/>
</dbReference>
<dbReference type="CDD" id="cd01298">
    <property type="entry name" value="ATZ_TRZ_like"/>
    <property type="match status" value="1"/>
</dbReference>
<dbReference type="FunFam" id="3.20.20.140:FF:000014">
    <property type="entry name" value="5-methylthioadenosine/S-adenosylhomocysteine deaminase"/>
    <property type="match status" value="1"/>
</dbReference>
<dbReference type="Gene3D" id="3.20.20.140">
    <property type="entry name" value="Metal-dependent hydrolases"/>
    <property type="match status" value="1"/>
</dbReference>
<dbReference type="Gene3D" id="2.30.40.10">
    <property type="entry name" value="Urease, subunit C, domain 1"/>
    <property type="match status" value="1"/>
</dbReference>
<dbReference type="HAMAP" id="MF_01281">
    <property type="entry name" value="MTA_SAH_deamin"/>
    <property type="match status" value="1"/>
</dbReference>
<dbReference type="InterPro" id="IPR006680">
    <property type="entry name" value="Amidohydro-rel"/>
</dbReference>
<dbReference type="InterPro" id="IPR023512">
    <property type="entry name" value="Deaminase_MtaD/DadD"/>
</dbReference>
<dbReference type="InterPro" id="IPR011059">
    <property type="entry name" value="Metal-dep_hydrolase_composite"/>
</dbReference>
<dbReference type="InterPro" id="IPR032466">
    <property type="entry name" value="Metal_Hydrolase"/>
</dbReference>
<dbReference type="InterPro" id="IPR050287">
    <property type="entry name" value="MTA/SAH_deaminase"/>
</dbReference>
<dbReference type="PANTHER" id="PTHR43794:SF11">
    <property type="entry name" value="AMIDOHYDROLASE-RELATED DOMAIN-CONTAINING PROTEIN"/>
    <property type="match status" value="1"/>
</dbReference>
<dbReference type="PANTHER" id="PTHR43794">
    <property type="entry name" value="AMINOHYDROLASE SSNA-RELATED"/>
    <property type="match status" value="1"/>
</dbReference>
<dbReference type="Pfam" id="PF01979">
    <property type="entry name" value="Amidohydro_1"/>
    <property type="match status" value="1"/>
</dbReference>
<dbReference type="SUPFAM" id="SSF51338">
    <property type="entry name" value="Composite domain of metallo-dependent hydrolases"/>
    <property type="match status" value="1"/>
</dbReference>
<dbReference type="SUPFAM" id="SSF51556">
    <property type="entry name" value="Metallo-dependent hydrolases"/>
    <property type="match status" value="1"/>
</dbReference>
<name>MTAD_SYNWW</name>
<organism>
    <name type="scientific">Syntrophomonas wolfei subsp. wolfei (strain DSM 2245B / Goettingen)</name>
    <dbReference type="NCBI Taxonomy" id="335541"/>
    <lineage>
        <taxon>Bacteria</taxon>
        <taxon>Bacillati</taxon>
        <taxon>Bacillota</taxon>
        <taxon>Clostridia</taxon>
        <taxon>Eubacteriales</taxon>
        <taxon>Syntrophomonadaceae</taxon>
        <taxon>Syntrophomonas</taxon>
    </lineage>
</organism>
<accession>Q0AYV2</accession>
<keyword id="KW-0378">Hydrolase</keyword>
<keyword id="KW-0479">Metal-binding</keyword>
<keyword id="KW-1185">Reference proteome</keyword>
<keyword id="KW-0862">Zinc</keyword>
<evidence type="ECO:0000255" key="1">
    <source>
        <dbReference type="HAMAP-Rule" id="MF_01281"/>
    </source>
</evidence>